<gene>
    <name evidence="1" type="primary">rplF</name>
    <name type="ordered locus">A1E_04295</name>
</gene>
<proteinExistence type="inferred from homology"/>
<name>RL6_RICCK</name>
<sequence length="177" mass="19655">MSRIGKLPITIPEGVKVSLNDLEVRISGPKGELSKTFKGNIVVLLAENKLLVKPLAVSKNARAMWGTARSIISNMVTGVKEGFQLKLEVNGVGYRAMVKGKYLNLMLAKSHNTKIEIPPDIKIDVPKQNIIILEGIDKEKLGQFASIIIKQRPPEPYKGKGIRFENQFIPRKEGKKN</sequence>
<feature type="chain" id="PRO_1000055297" description="Large ribosomal subunit protein uL6">
    <location>
        <begin position="1"/>
        <end position="177"/>
    </location>
</feature>
<accession>A8EZK1</accession>
<reference key="1">
    <citation type="submission" date="2007-09" db="EMBL/GenBank/DDBJ databases">
        <title>Complete genome sequence of Rickettsia canadensis.</title>
        <authorList>
            <person name="Madan A."/>
            <person name="Fahey J."/>
            <person name="Helton E."/>
            <person name="Ketteman M."/>
            <person name="Madan A."/>
            <person name="Rodrigues S."/>
            <person name="Sanchez A."/>
            <person name="Whiting M."/>
            <person name="Dasch G."/>
            <person name="Eremeeva M."/>
        </authorList>
    </citation>
    <scope>NUCLEOTIDE SEQUENCE [LARGE SCALE GENOMIC DNA]</scope>
    <source>
        <strain>McKiel</strain>
    </source>
</reference>
<dbReference type="EMBL" id="CP000409">
    <property type="protein sequence ID" value="ABV73784.1"/>
    <property type="molecule type" value="Genomic_DNA"/>
</dbReference>
<dbReference type="RefSeq" id="WP_012148979.1">
    <property type="nucleotide sequence ID" value="NC_009879.1"/>
</dbReference>
<dbReference type="SMR" id="A8EZK1"/>
<dbReference type="STRING" id="293613.A1E_04295"/>
<dbReference type="KEGG" id="rcm:A1E_04295"/>
<dbReference type="eggNOG" id="COG0097">
    <property type="taxonomic scope" value="Bacteria"/>
</dbReference>
<dbReference type="HOGENOM" id="CLU_065464_1_2_5"/>
<dbReference type="Proteomes" id="UP000007056">
    <property type="component" value="Chromosome"/>
</dbReference>
<dbReference type="GO" id="GO:1990904">
    <property type="term" value="C:ribonucleoprotein complex"/>
    <property type="evidence" value="ECO:0007669"/>
    <property type="project" value="UniProtKB-KW"/>
</dbReference>
<dbReference type="GO" id="GO:0005840">
    <property type="term" value="C:ribosome"/>
    <property type="evidence" value="ECO:0007669"/>
    <property type="project" value="UniProtKB-KW"/>
</dbReference>
<dbReference type="GO" id="GO:0019843">
    <property type="term" value="F:rRNA binding"/>
    <property type="evidence" value="ECO:0007669"/>
    <property type="project" value="UniProtKB-UniRule"/>
</dbReference>
<dbReference type="GO" id="GO:0003735">
    <property type="term" value="F:structural constituent of ribosome"/>
    <property type="evidence" value="ECO:0007669"/>
    <property type="project" value="InterPro"/>
</dbReference>
<dbReference type="GO" id="GO:0002181">
    <property type="term" value="P:cytoplasmic translation"/>
    <property type="evidence" value="ECO:0007669"/>
    <property type="project" value="TreeGrafter"/>
</dbReference>
<dbReference type="Gene3D" id="3.90.930.12">
    <property type="entry name" value="Ribosomal protein L6, alpha-beta domain"/>
    <property type="match status" value="2"/>
</dbReference>
<dbReference type="HAMAP" id="MF_01365_B">
    <property type="entry name" value="Ribosomal_uL6_B"/>
    <property type="match status" value="1"/>
</dbReference>
<dbReference type="InterPro" id="IPR000702">
    <property type="entry name" value="Ribosomal_uL6-like"/>
</dbReference>
<dbReference type="InterPro" id="IPR036789">
    <property type="entry name" value="Ribosomal_uL6-like_a/b-dom_sf"/>
</dbReference>
<dbReference type="InterPro" id="IPR020040">
    <property type="entry name" value="Ribosomal_uL6_a/b-dom"/>
</dbReference>
<dbReference type="InterPro" id="IPR019906">
    <property type="entry name" value="Ribosomal_uL6_bac-type"/>
</dbReference>
<dbReference type="InterPro" id="IPR002358">
    <property type="entry name" value="Ribosomal_uL6_CS"/>
</dbReference>
<dbReference type="NCBIfam" id="TIGR03654">
    <property type="entry name" value="L6_bact"/>
    <property type="match status" value="1"/>
</dbReference>
<dbReference type="PANTHER" id="PTHR11655">
    <property type="entry name" value="60S/50S RIBOSOMAL PROTEIN L6/L9"/>
    <property type="match status" value="1"/>
</dbReference>
<dbReference type="PANTHER" id="PTHR11655:SF14">
    <property type="entry name" value="LARGE RIBOSOMAL SUBUNIT PROTEIN UL6M"/>
    <property type="match status" value="1"/>
</dbReference>
<dbReference type="Pfam" id="PF00347">
    <property type="entry name" value="Ribosomal_L6"/>
    <property type="match status" value="2"/>
</dbReference>
<dbReference type="PIRSF" id="PIRSF002162">
    <property type="entry name" value="Ribosomal_L6"/>
    <property type="match status" value="1"/>
</dbReference>
<dbReference type="PRINTS" id="PR00059">
    <property type="entry name" value="RIBOSOMALL6"/>
</dbReference>
<dbReference type="SUPFAM" id="SSF56053">
    <property type="entry name" value="Ribosomal protein L6"/>
    <property type="match status" value="2"/>
</dbReference>
<dbReference type="PROSITE" id="PS00525">
    <property type="entry name" value="RIBOSOMAL_L6_1"/>
    <property type="match status" value="1"/>
</dbReference>
<evidence type="ECO:0000255" key="1">
    <source>
        <dbReference type="HAMAP-Rule" id="MF_01365"/>
    </source>
</evidence>
<evidence type="ECO:0000305" key="2"/>
<protein>
    <recommendedName>
        <fullName evidence="1">Large ribosomal subunit protein uL6</fullName>
    </recommendedName>
    <alternativeName>
        <fullName evidence="2">50S ribosomal protein L6</fullName>
    </alternativeName>
</protein>
<keyword id="KW-0687">Ribonucleoprotein</keyword>
<keyword id="KW-0689">Ribosomal protein</keyword>
<keyword id="KW-0694">RNA-binding</keyword>
<keyword id="KW-0699">rRNA-binding</keyword>
<organism>
    <name type="scientific">Rickettsia canadensis (strain McKiel)</name>
    <dbReference type="NCBI Taxonomy" id="293613"/>
    <lineage>
        <taxon>Bacteria</taxon>
        <taxon>Pseudomonadati</taxon>
        <taxon>Pseudomonadota</taxon>
        <taxon>Alphaproteobacteria</taxon>
        <taxon>Rickettsiales</taxon>
        <taxon>Rickettsiaceae</taxon>
        <taxon>Rickettsieae</taxon>
        <taxon>Rickettsia</taxon>
        <taxon>belli group</taxon>
    </lineage>
</organism>
<comment type="function">
    <text evidence="1">This protein binds to the 23S rRNA, and is important in its secondary structure. It is located near the subunit interface in the base of the L7/L12 stalk, and near the tRNA binding site of the peptidyltransferase center.</text>
</comment>
<comment type="subunit">
    <text evidence="1">Part of the 50S ribosomal subunit.</text>
</comment>
<comment type="similarity">
    <text evidence="1">Belongs to the universal ribosomal protein uL6 family.</text>
</comment>